<organism>
    <name type="scientific">Saccharomyces cerevisiae (strain ATCC 204508 / S288c)</name>
    <name type="common">Baker's yeast</name>
    <dbReference type="NCBI Taxonomy" id="559292"/>
    <lineage>
        <taxon>Eukaryota</taxon>
        <taxon>Fungi</taxon>
        <taxon>Dikarya</taxon>
        <taxon>Ascomycota</taxon>
        <taxon>Saccharomycotina</taxon>
        <taxon>Saccharomycetes</taxon>
        <taxon>Saccharomycetales</taxon>
        <taxon>Saccharomycetaceae</taxon>
        <taxon>Saccharomyces</taxon>
    </lineage>
</organism>
<evidence type="ECO:0000255" key="1">
    <source>
        <dbReference type="PROSITE-ProRule" id="PRU00192"/>
    </source>
</evidence>
<evidence type="ECO:0000256" key="2">
    <source>
        <dbReference type="SAM" id="MobiDB-lite"/>
    </source>
</evidence>
<evidence type="ECO:0000269" key="3">
    <source>
    </source>
</evidence>
<evidence type="ECO:0000269" key="4">
    <source>
    </source>
</evidence>
<evidence type="ECO:0000269" key="5">
    <source>
    </source>
</evidence>
<evidence type="ECO:0000305" key="6"/>
<evidence type="ECO:0007744" key="7">
    <source>
    </source>
</evidence>
<evidence type="ECO:0007744" key="8">
    <source>
    </source>
</evidence>
<evidence type="ECO:0007744" key="9">
    <source>
    </source>
</evidence>
<evidence type="ECO:0007744" key="10">
    <source>
    </source>
</evidence>
<evidence type="ECO:0007829" key="11">
    <source>
        <dbReference type="PDB" id="1OOT"/>
    </source>
</evidence>
<name>LSB3_YEAST</name>
<protein>
    <recommendedName>
        <fullName>LAS seventeen-binding protein 3</fullName>
        <shortName>LAS17-binding protein 3</shortName>
    </recommendedName>
</protein>
<gene>
    <name type="primary">LSB3</name>
    <name type="ordered locus">YFR024C-A</name>
    <name type="ORF">YFR024C</name>
</gene>
<feature type="chain" id="PRO_0000202691" description="LAS seventeen-binding protein 3">
    <location>
        <begin position="1"/>
        <end position="459"/>
    </location>
</feature>
<feature type="domain" description="SH3" evidence="1">
    <location>
        <begin position="400"/>
        <end position="459"/>
    </location>
</feature>
<feature type="region of interest" description="Disordered" evidence="2">
    <location>
        <begin position="219"/>
        <end position="403"/>
    </location>
</feature>
<feature type="compositionally biased region" description="Acidic residues" evidence="2">
    <location>
        <begin position="229"/>
        <end position="242"/>
    </location>
</feature>
<feature type="compositionally biased region" description="Low complexity" evidence="2">
    <location>
        <begin position="243"/>
        <end position="262"/>
    </location>
</feature>
<feature type="compositionally biased region" description="Polar residues" evidence="2">
    <location>
        <begin position="289"/>
        <end position="300"/>
    </location>
</feature>
<feature type="compositionally biased region" description="Acidic residues" evidence="2">
    <location>
        <begin position="340"/>
        <end position="350"/>
    </location>
</feature>
<feature type="compositionally biased region" description="Basic and acidic residues" evidence="2">
    <location>
        <begin position="351"/>
        <end position="371"/>
    </location>
</feature>
<feature type="compositionally biased region" description="Polar residues" evidence="2">
    <location>
        <begin position="372"/>
        <end position="391"/>
    </location>
</feature>
<feature type="compositionally biased region" description="Low complexity" evidence="2">
    <location>
        <begin position="393"/>
        <end position="403"/>
    </location>
</feature>
<feature type="modified residue" description="Phosphoserine" evidence="10">
    <location>
        <position position="227"/>
    </location>
</feature>
<feature type="modified residue" description="Phosphothreonine" evidence="10">
    <location>
        <position position="298"/>
    </location>
</feature>
<feature type="modified residue" description="Phosphoserine" evidence="8 9 10">
    <location>
        <position position="300"/>
    </location>
</feature>
<feature type="modified residue" description="Phosphoserine" evidence="7 8 9 10">
    <location>
        <position position="303"/>
    </location>
</feature>
<feature type="modified residue" description="Phosphothreonine" evidence="8 10">
    <location>
        <position position="393"/>
    </location>
</feature>
<feature type="modified residue" description="Phosphoserine" evidence="10">
    <location>
        <position position="397"/>
    </location>
</feature>
<feature type="modified residue" description="Phosphoserine" evidence="8 10">
    <location>
        <position position="402"/>
    </location>
</feature>
<feature type="modified residue" description="Phosphoserine" evidence="9">
    <location>
        <position position="416"/>
    </location>
</feature>
<feature type="strand" evidence="11">
    <location>
        <begin position="404"/>
        <end position="409"/>
    </location>
</feature>
<feature type="strand" evidence="11">
    <location>
        <begin position="426"/>
        <end position="431"/>
    </location>
</feature>
<feature type="strand" evidence="11">
    <location>
        <begin position="438"/>
        <end position="444"/>
    </location>
</feature>
<feature type="strand" evidence="11">
    <location>
        <begin position="447"/>
        <end position="452"/>
    </location>
</feature>
<feature type="helix" evidence="11">
    <location>
        <begin position="453"/>
        <end position="455"/>
    </location>
</feature>
<feature type="strand" evidence="11">
    <location>
        <begin position="456"/>
        <end position="458"/>
    </location>
</feature>
<sequence>MGINNPIPRSLKSETKKAAKILASFVKPNQVFGADQVIPPDVLKRAKGLAIITILKAGFLFSGRAGSGVIVARLKDGTWSAPSAIAMAGAGAGGMVGIELTDFVFILNTQDAVKSFSEFGTITLGGNVSVSAGPLGRSAEAAASASAGGVAAVFAYSKSKGLFAGVSVEGSAIIERREANRKFYGDNCTAKMILSGRIRPPPAVDPLFRVLESRAFNYRPSNGGRGSFDDDEDDYYDDDDYYNDIPSSFSSTDASSTRPNTRSTRRRAQSGSRYTFDDDDDDDDYGTGYSRNSRLAPTNSGGSGGKLDDPSGASSYYASHRRSGTAQSRARSSRNRWADDEYDDYDDDYESGYRRGNGRDRTKDREVDDLSNRFSKSRISSASTPQTSQGRFTAPTSPSTSSPKAVALYSFAGEESGDLPFRKGDVITILKKSDSQNDWWTGRVNGREGIFPANYVELV</sequence>
<proteinExistence type="evidence at protein level"/>
<comment type="subunit">
    <text evidence="3">Interacts with LAS17.</text>
</comment>
<comment type="interaction">
    <interactant intactId="EBI-22980">
        <id>P43603</id>
    </interactant>
    <interactant intactId="EBI-2036">
        <id>P15891</id>
        <label>ABP1</label>
    </interactant>
    <organismsDiffer>false</organismsDiffer>
    <experiments>6</experiments>
</comment>
<comment type="interaction">
    <interactant intactId="EBI-22980">
        <id>P43603</id>
    </interactant>
    <interactant intactId="EBI-32973">
        <id>Q12168</id>
        <label>ACF2</label>
    </interactant>
    <organismsDiffer>false</organismsDiffer>
    <experiments>7</experiments>
</comment>
<comment type="interaction">
    <interactant intactId="EBI-22980">
        <id>P43603</id>
    </interactant>
    <interactant intactId="EBI-25556">
        <id>P47129</id>
        <label>ACF4</label>
    </interactant>
    <organismsDiffer>false</organismsDiffer>
    <experiments>4</experiments>
</comment>
<comment type="interaction">
    <interactant intactId="EBI-22980">
        <id>P43603</id>
    </interactant>
    <interactant intactId="EBI-2362">
        <id>P38090</id>
        <label>AGP2</label>
    </interactant>
    <organismsDiffer>false</organismsDiffer>
    <experiments>2</experiments>
</comment>
<comment type="interaction">
    <interactant intactId="EBI-22980">
        <id>P43603</id>
    </interactant>
    <interactant intactId="EBI-25376">
        <id>P40563</id>
        <label>AIM21</label>
    </interactant>
    <organismsDiffer>false</organismsDiffer>
    <experiments>2</experiments>
</comment>
<comment type="interaction">
    <interactant intactId="EBI-22980">
        <id>P43603</id>
    </interactant>
    <interactant intactId="EBI-21584">
        <id>P38266</id>
        <label>AIM3</label>
    </interactant>
    <organismsDiffer>false</organismsDiffer>
    <experiments>4</experiments>
</comment>
<comment type="interaction">
    <interactant intactId="EBI-22980">
        <id>P43603</id>
    </interactant>
    <interactant intactId="EBI-28798">
        <id>P53933</id>
        <label>APP1</label>
    </interactant>
    <organismsDiffer>false</organismsDiffer>
    <experiments>8</experiments>
</comment>
<comment type="interaction">
    <interactant intactId="EBI-22980">
        <id>P43603</id>
    </interactant>
    <interactant intactId="EBI-37047">
        <id>Q06604</id>
        <label>BSP1</label>
    </interactant>
    <organismsDiffer>false</organismsDiffer>
    <experiments>7</experiments>
</comment>
<comment type="interaction">
    <interactant intactId="EBI-22980">
        <id>P43603</id>
    </interactant>
    <interactant intactId="EBI-4447">
        <id>P09119</id>
        <label>CDC6</label>
    </interactant>
    <organismsDiffer>false</organismsDiffer>
    <experiments>2</experiments>
</comment>
<comment type="interaction">
    <interactant intactId="EBI-22980">
        <id>P43603</id>
    </interactant>
    <interactant intactId="EBI-35343">
        <id>Q12510</id>
        <label>CMR1</label>
    </interactant>
    <organismsDiffer>false</organismsDiffer>
    <experiments>2</experiments>
</comment>
<comment type="interaction">
    <interactant intactId="EBI-22980">
        <id>P43603</id>
    </interactant>
    <interactant intactId="EBI-37580">
        <id>Q08412</id>
        <label>CUE5</label>
    </interactant>
    <organismsDiffer>false</organismsDiffer>
    <experiments>8</experiments>
</comment>
<comment type="interaction">
    <interactant intactId="EBI-22980">
        <id>P43603</id>
    </interactant>
    <interactant intactId="EBI-21048">
        <id>P38140</id>
        <label>ERT1</label>
    </interactant>
    <organismsDiffer>false</organismsDiffer>
    <experiments>3</experiments>
</comment>
<comment type="interaction">
    <interactant intactId="EBI-22980">
        <id>P43603</id>
    </interactant>
    <interactant intactId="EBI-7968">
        <id>P40956</id>
        <label>GTS1</label>
    </interactant>
    <organismsDiffer>false</organismsDiffer>
    <experiments>4</experiments>
</comment>
<comment type="interaction">
    <interactant intactId="EBI-22980">
        <id>P43603</id>
    </interactant>
    <interactant intactId="EBI-27427">
        <id>Q04322</id>
        <label>GYL1</label>
    </interactant>
    <organismsDiffer>false</organismsDiffer>
    <experiments>6</experiments>
</comment>
<comment type="interaction">
    <interactant intactId="EBI-22980">
        <id>P43603</id>
    </interactant>
    <interactant intactId="EBI-38508">
        <id>Q12344</id>
        <label>GYP5</label>
    </interactant>
    <organismsDiffer>false</organismsDiffer>
    <experiments>3</experiments>
</comment>
<comment type="interaction">
    <interactant intactId="EBI-22980">
        <id>P43603</id>
    </interactant>
    <interactant intactId="EBI-23614">
        <id>P40325</id>
        <label>HUA1</label>
    </interactant>
    <organismsDiffer>false</organismsDiffer>
    <experiments>5</experiments>
</comment>
<comment type="interaction">
    <interactant intactId="EBI-22980">
        <id>P43603</id>
    </interactant>
    <interactant intactId="EBI-10022">
        <id>Q12446</id>
        <label>LAS17</label>
    </interactant>
    <organismsDiffer>false</organismsDiffer>
    <experiments>8</experiments>
</comment>
<comment type="interaction">
    <interactant intactId="EBI-22980">
        <id>P43603</id>
    </interactant>
    <interactant intactId="EBI-22980">
        <id>P43603</id>
        <label>LSB3</label>
    </interactant>
    <organismsDiffer>false</organismsDiffer>
    <experiments>3</experiments>
</comment>
<comment type="interaction">
    <interactant intactId="EBI-22980">
        <id>P43603</id>
    </interactant>
    <interactant intactId="EBI-14422">
        <id>P33400</id>
        <label>RIM101</label>
    </interactant>
    <organismsDiffer>false</organismsDiffer>
    <experiments>2</experiments>
</comment>
<comment type="interaction">
    <interactant intactId="EBI-22980">
        <id>P43603</id>
    </interactant>
    <interactant intactId="EBI-24005">
        <id>P53118</id>
        <label>ROG1</label>
    </interactant>
    <organismsDiffer>false</organismsDiffer>
    <experiments>2</experiments>
</comment>
<comment type="interaction">
    <interactant intactId="EBI-22980">
        <id>P43603</id>
    </interactant>
    <interactant intactId="EBI-16896">
        <id>P32855</id>
        <label>SEC8</label>
    </interactant>
    <organismsDiffer>false</organismsDiffer>
    <experiments>3</experiments>
</comment>
<comment type="interaction">
    <interactant intactId="EBI-22980">
        <id>P43603</id>
    </interactant>
    <interactant intactId="EBI-17313">
        <id>P32790</id>
        <label>SLA1</label>
    </interactant>
    <organismsDiffer>false</organismsDiffer>
    <experiments>7</experiments>
</comment>
<comment type="interaction">
    <interactant intactId="EBI-22980">
        <id>P43603</id>
    </interactant>
    <interactant intactId="EBI-28706">
        <id>P53955</id>
        <label>SLM2</label>
    </interactant>
    <organismsDiffer>false</organismsDiffer>
    <experiments>2</experiments>
</comment>
<comment type="interaction">
    <interactant intactId="EBI-22980">
        <id>P43603</id>
    </interactant>
    <interactant intactId="EBI-411625">
        <id>P25604</id>
        <label>STP22</label>
    </interactant>
    <organismsDiffer>false</organismsDiffer>
    <experiments>3</experiments>
</comment>
<comment type="interaction">
    <interactant intactId="EBI-22980">
        <id>P43603</id>
    </interactant>
    <interactant intactId="EBI-19857">
        <id>P40453</id>
        <label>UBP7</label>
    </interactant>
    <organismsDiffer>false</organismsDiffer>
    <experiments>2</experiments>
</comment>
<comment type="interaction">
    <interactant intactId="EBI-22980">
        <id>P43603</id>
    </interactant>
    <interactant intactId="EBI-23796">
        <id>P53169</id>
        <label>YBP2</label>
    </interactant>
    <organismsDiffer>false</organismsDiffer>
    <experiments>2</experiments>
</comment>
<comment type="interaction">
    <interactant intactId="EBI-22980">
        <id>P43603</id>
    </interactant>
    <interactant intactId="EBI-24848">
        <id>P38870</id>
        <label>YHR182W</label>
    </interactant>
    <organismsDiffer>false</organismsDiffer>
    <experiments>2</experiments>
</comment>
<comment type="interaction">
    <interactant intactId="EBI-22980">
        <id>P43603</id>
    </interactant>
    <interactant intactId="EBI-24460">
        <id>P32793</id>
        <label>YSC84</label>
    </interactant>
    <organismsDiffer>false</organismsDiffer>
    <experiments>4</experiments>
</comment>
<comment type="subcellular location">
    <subcellularLocation>
        <location evidence="4">Cytoplasm</location>
    </subcellularLocation>
</comment>
<comment type="PTM">
    <text>Phosphorylation of Ser-397 is induced 2-fold in response to mating pheromone.</text>
</comment>
<comment type="miscellaneous">
    <text evidence="5">Present with 18000 molecules/cell in log phase SD medium.</text>
</comment>
<comment type="similarity">
    <text evidence="6">Belongs to the SH3YL1 family.</text>
</comment>
<comment type="sequence caution" evidence="6">
    <conflict type="erroneous gene model prediction">
        <sequence resource="EMBL-CDS" id="BAA09263"/>
    </conflict>
</comment>
<reference key="1">
    <citation type="journal article" date="1995" name="Nat. Genet.">
        <title>Analysis of the nucleotide sequence of chromosome VI from Saccharomyces cerevisiae.</title>
        <authorList>
            <person name="Murakami Y."/>
            <person name="Naitou M."/>
            <person name="Hagiwara H."/>
            <person name="Shibata T."/>
            <person name="Ozawa M."/>
            <person name="Sasanuma S."/>
            <person name="Sasanuma M."/>
            <person name="Tsuchiya Y."/>
            <person name="Soeda E."/>
            <person name="Yokoyama K."/>
            <person name="Yamazaki M."/>
            <person name="Tashiro H."/>
            <person name="Eki T."/>
        </authorList>
    </citation>
    <scope>NUCLEOTIDE SEQUENCE [LARGE SCALE GENOMIC DNA]</scope>
    <source>
        <strain>ATCC 204508 / S288c</strain>
    </source>
</reference>
<reference key="2">
    <citation type="journal article" date="2014" name="G3 (Bethesda)">
        <title>The reference genome sequence of Saccharomyces cerevisiae: Then and now.</title>
        <authorList>
            <person name="Engel S.R."/>
            <person name="Dietrich F.S."/>
            <person name="Fisk D.G."/>
            <person name="Binkley G."/>
            <person name="Balakrishnan R."/>
            <person name="Costanzo M.C."/>
            <person name="Dwight S.S."/>
            <person name="Hitz B.C."/>
            <person name="Karra K."/>
            <person name="Nash R.S."/>
            <person name="Weng S."/>
            <person name="Wong E.D."/>
            <person name="Lloyd P."/>
            <person name="Skrzypek M.S."/>
            <person name="Miyasato S.R."/>
            <person name="Simison M."/>
            <person name="Cherry J.M."/>
        </authorList>
    </citation>
    <scope>GENOME REANNOTATION</scope>
    <source>
        <strain>ATCC 204508 / S288c</strain>
    </source>
</reference>
<reference key="3">
    <citation type="journal article" date="2005" name="Mol. Cell. Proteomics">
        <title>Quantitative phosphoproteomics applied to the yeast pheromone signaling pathway.</title>
        <authorList>
            <person name="Gruhler A."/>
            <person name="Olsen J.V."/>
            <person name="Mohammed S."/>
            <person name="Mortensen P."/>
            <person name="Faergeman N.J."/>
            <person name="Mann M."/>
            <person name="Jensen O.N."/>
        </authorList>
    </citation>
    <scope>PHOSPHORYLATION [LARGE SCALE ANALYSIS] AT SER-303</scope>
    <scope>IDENTIFICATION BY MASS SPECTROMETRY [LARGE SCALE ANALYSIS]</scope>
    <source>
        <strain>YAL6B</strain>
    </source>
</reference>
<reference key="4">
    <citation type="journal article" date="2007" name="J. Proteome Res.">
        <title>Large-scale phosphorylation analysis of alpha-factor-arrested Saccharomyces cerevisiae.</title>
        <authorList>
            <person name="Li X."/>
            <person name="Gerber S.A."/>
            <person name="Rudner A.D."/>
            <person name="Beausoleil S.A."/>
            <person name="Haas W."/>
            <person name="Villen J."/>
            <person name="Elias J.E."/>
            <person name="Gygi S.P."/>
        </authorList>
    </citation>
    <scope>PHOSPHORYLATION [LARGE SCALE ANALYSIS] AT SER-300; SER-303; THR-393 AND SER-402</scope>
    <scope>IDENTIFICATION BY MASS SPECTROMETRY [LARGE SCALE ANALYSIS]</scope>
    <source>
        <strain>ADR376</strain>
    </source>
</reference>
<reference key="5">
    <citation type="journal article" date="2008" name="Mol. Cell. Proteomics">
        <title>A multidimensional chromatography technology for in-depth phosphoproteome analysis.</title>
        <authorList>
            <person name="Albuquerque C.P."/>
            <person name="Smolka M.B."/>
            <person name="Payne S.H."/>
            <person name="Bafna V."/>
            <person name="Eng J."/>
            <person name="Zhou H."/>
        </authorList>
    </citation>
    <scope>PHOSPHORYLATION [LARGE SCALE ANALYSIS] AT SER-300; SER-303 AND SER-416</scope>
    <scope>IDENTIFICATION BY MASS SPECTROMETRY [LARGE SCALE ANALYSIS]</scope>
</reference>
<reference key="6">
    <citation type="unpublished observations" date="2008-06">
        <authorList>
            <consortium name="Saccharomyces Genome Database (SGD)"/>
        </authorList>
    </citation>
    <scope>REVISION OF GENE MODEL</scope>
</reference>
<reference key="7">
    <citation type="journal article" date="1999" name="Mol. Biol. Cell">
        <title>The Saccharomyces cerevisiae homologue of human Wiskott-Aldrich syndrome protein Las17p interacts with the Arp2/3 complex.</title>
        <authorList>
            <person name="Madania A."/>
            <person name="Dumoulin P."/>
            <person name="Grava S."/>
            <person name="Kitamoto H."/>
            <person name="Scharer-Brodbeck C."/>
            <person name="Soulard A."/>
            <person name="Moreau V."/>
            <person name="Winsor B."/>
        </authorList>
    </citation>
    <scope>INTERACTION WITH LAS17</scope>
</reference>
<reference key="8">
    <citation type="journal article" date="2000" name="Nucleic Acids Res.">
        <title>Test of intron predictions reveals novel splice sites, alternatively spliced mRNAs and new introns in meiotically regulated genes of yeast.</title>
        <authorList>
            <person name="Davis C.A."/>
            <person name="Grate L."/>
            <person name="Spingola M."/>
            <person name="Ares M. Jr."/>
        </authorList>
    </citation>
    <scope>IDENTIFICATION OF INTRON</scope>
</reference>
<reference key="9">
    <citation type="journal article" date="2003" name="Nature">
        <title>Global analysis of protein localization in budding yeast.</title>
        <authorList>
            <person name="Huh W.-K."/>
            <person name="Falvo J.V."/>
            <person name="Gerke L.C."/>
            <person name="Carroll A.S."/>
            <person name="Howson R.W."/>
            <person name="Weissman J.S."/>
            <person name="O'Shea E.K."/>
        </authorList>
    </citation>
    <scope>SUBCELLULAR LOCATION [LARGE SCALE ANALYSIS]</scope>
</reference>
<reference key="10">
    <citation type="journal article" date="2003" name="Nature">
        <title>Global analysis of protein expression in yeast.</title>
        <authorList>
            <person name="Ghaemmaghami S."/>
            <person name="Huh W.-K."/>
            <person name="Bower K."/>
            <person name="Howson R.W."/>
            <person name="Belle A."/>
            <person name="Dephoure N."/>
            <person name="O'Shea E.K."/>
            <person name="Weissman J.S."/>
        </authorList>
    </citation>
    <scope>LEVEL OF PROTEIN EXPRESSION [LARGE SCALE ANALYSIS]</scope>
</reference>
<reference key="11">
    <citation type="journal article" date="2009" name="Science">
        <title>Global analysis of Cdk1 substrate phosphorylation sites provides insights into evolution.</title>
        <authorList>
            <person name="Holt L.J."/>
            <person name="Tuch B.B."/>
            <person name="Villen J."/>
            <person name="Johnson A.D."/>
            <person name="Gygi S.P."/>
            <person name="Morgan D.O."/>
        </authorList>
    </citation>
    <scope>PHOSPHORYLATION [LARGE SCALE ANALYSIS] AT SER-227; THR-298; SER-300; SER-303; THR-393; SER-397 AND SER-402</scope>
    <scope>IDENTIFICATION BY MASS SPECTROMETRY [LARGE SCALE ANALYSIS]</scope>
</reference>
<reference key="12">
    <citation type="submission" date="2004-04" db="PDB data bank">
        <title>Crystal structure of the SH3 domain from a S.cerevisiae hypothetical 40.4 kDa protein at 1.39 A resolution.</title>
        <authorList>
            <person name="Kursula P."/>
            <person name="Lehmann F."/>
            <person name="Song Y.H."/>
            <person name="Wilmanns M."/>
        </authorList>
    </citation>
    <scope>X-RAY CRYSTALLOGRAPHY (1.39 ANGSTROMS) OF 393-451</scope>
</reference>
<reference key="13">
    <citation type="submission" date="2005-04" db="PDB data bank">
        <title>Yeast SH3 domain structural genomics.</title>
        <authorList>
            <person name="Kursula P."/>
            <person name="Kursula I."/>
            <person name="Lehmann F."/>
            <person name="Song Y.H."/>
            <person name="Wilmanns M."/>
        </authorList>
    </citation>
    <scope>X-RAY CRYSTALLOGRAPHY (1.4 ANGSTROMS) OF 393-451</scope>
</reference>
<accession>P43603</accession>
<accession>D6VTQ4</accession>
<dbReference type="EMBL" id="D50617">
    <property type="protein sequence ID" value="BAA09263.1"/>
    <property type="status" value="ALT_SEQ"/>
    <property type="molecule type" value="Genomic_DNA"/>
</dbReference>
<dbReference type="EMBL" id="BK006940">
    <property type="protein sequence ID" value="DAA12464.1"/>
    <property type="molecule type" value="Genomic_DNA"/>
</dbReference>
<dbReference type="RefSeq" id="NP_219497.4">
    <property type="nucleotide sequence ID" value="NM_001180865.3"/>
</dbReference>
<dbReference type="PDB" id="1OOT">
    <property type="method" value="X-ray"/>
    <property type="resolution" value="1.39 A"/>
    <property type="chains" value="A=401-459"/>
</dbReference>
<dbReference type="PDB" id="1SSH">
    <property type="method" value="X-ray"/>
    <property type="resolution" value="1.40 A"/>
    <property type="chains" value="A=401-459"/>
</dbReference>
<dbReference type="PDBsum" id="1OOT"/>
<dbReference type="PDBsum" id="1SSH"/>
<dbReference type="SMR" id="P43603"/>
<dbReference type="BioGRID" id="31177">
    <property type="interactions" value="261"/>
</dbReference>
<dbReference type="DIP" id="DIP-6259N"/>
<dbReference type="FunCoup" id="P43603">
    <property type="interactions" value="224"/>
</dbReference>
<dbReference type="IntAct" id="P43603">
    <property type="interactions" value="147"/>
</dbReference>
<dbReference type="MINT" id="P43603"/>
<dbReference type="STRING" id="4932.YFR024C-A"/>
<dbReference type="GlyGen" id="P43603">
    <property type="glycosylation" value="3 sites, 1 O-linked glycan (3 sites)"/>
</dbReference>
<dbReference type="iPTMnet" id="P43603"/>
<dbReference type="PaxDb" id="4932-YFR024C-A"/>
<dbReference type="PeptideAtlas" id="P43603"/>
<dbReference type="EnsemblFungi" id="YFR024C-A_mRNA">
    <property type="protein sequence ID" value="YFR024C-A"/>
    <property type="gene ID" value="YFR024C-A"/>
</dbReference>
<dbReference type="GeneID" id="850580"/>
<dbReference type="KEGG" id="sce:YFR024C-A"/>
<dbReference type="AGR" id="SGD:S000002968"/>
<dbReference type="SGD" id="S000002968">
    <property type="gene designation" value="LSB3"/>
</dbReference>
<dbReference type="VEuPathDB" id="FungiDB:YFR024C-A"/>
<dbReference type="eggNOG" id="KOG1843">
    <property type="taxonomic scope" value="Eukaryota"/>
</dbReference>
<dbReference type="GeneTree" id="ENSGT00510000048137"/>
<dbReference type="HOGENOM" id="CLU_015320_2_0_1"/>
<dbReference type="InParanoid" id="P43603"/>
<dbReference type="OMA" id="SNCKARN"/>
<dbReference type="OrthoDB" id="443981at2759"/>
<dbReference type="BioCyc" id="YEAST:G3O-30504-MONOMER"/>
<dbReference type="BioGRID-ORCS" id="850580">
    <property type="hits" value="6 hits in 10 CRISPR screens"/>
</dbReference>
<dbReference type="EvolutionaryTrace" id="P43603"/>
<dbReference type="PRO" id="PR:P43603"/>
<dbReference type="Proteomes" id="UP000002311">
    <property type="component" value="Chromosome VI"/>
</dbReference>
<dbReference type="RNAct" id="P43603">
    <property type="molecule type" value="protein"/>
</dbReference>
<dbReference type="GO" id="GO:0030479">
    <property type="term" value="C:actin cortical patch"/>
    <property type="evidence" value="ECO:0000318"/>
    <property type="project" value="GO_Central"/>
</dbReference>
<dbReference type="GO" id="GO:0005935">
    <property type="term" value="C:cellular bud neck"/>
    <property type="evidence" value="ECO:0007005"/>
    <property type="project" value="SGD"/>
</dbReference>
<dbReference type="GO" id="GO:0005737">
    <property type="term" value="C:cytoplasm"/>
    <property type="evidence" value="ECO:0007005"/>
    <property type="project" value="SGD"/>
</dbReference>
<dbReference type="GO" id="GO:0005739">
    <property type="term" value="C:mitochondrion"/>
    <property type="evidence" value="ECO:0007005"/>
    <property type="project" value="SGD"/>
</dbReference>
<dbReference type="GO" id="GO:0051015">
    <property type="term" value="F:actin filament binding"/>
    <property type="evidence" value="ECO:0000318"/>
    <property type="project" value="GO_Central"/>
</dbReference>
<dbReference type="GO" id="GO:0042802">
    <property type="term" value="F:identical protein binding"/>
    <property type="evidence" value="ECO:0000353"/>
    <property type="project" value="IntAct"/>
</dbReference>
<dbReference type="GO" id="GO:0035091">
    <property type="term" value="F:phosphatidylinositol binding"/>
    <property type="evidence" value="ECO:0000318"/>
    <property type="project" value="GO_Central"/>
</dbReference>
<dbReference type="GO" id="GO:0051666">
    <property type="term" value="P:actin cortical patch localization"/>
    <property type="evidence" value="ECO:0000315"/>
    <property type="project" value="SGD"/>
</dbReference>
<dbReference type="GO" id="GO:0051017">
    <property type="term" value="P:actin filament bundle assembly"/>
    <property type="evidence" value="ECO:0000318"/>
    <property type="project" value="GO_Central"/>
</dbReference>
<dbReference type="CDD" id="cd11842">
    <property type="entry name" value="SH3_Ysc84p_like"/>
    <property type="match status" value="1"/>
</dbReference>
<dbReference type="CDD" id="cd11525">
    <property type="entry name" value="SYLF_SH3YL1_like"/>
    <property type="match status" value="1"/>
</dbReference>
<dbReference type="FunFam" id="2.30.30.40:FF:000100">
    <property type="entry name" value="SH3 domain-containing YSC84-like protein 1"/>
    <property type="match status" value="1"/>
</dbReference>
<dbReference type="Gene3D" id="2.30.30.40">
    <property type="entry name" value="SH3 Domains"/>
    <property type="match status" value="1"/>
</dbReference>
<dbReference type="InterPro" id="IPR036028">
    <property type="entry name" value="SH3-like_dom_sf"/>
</dbReference>
<dbReference type="InterPro" id="IPR001452">
    <property type="entry name" value="SH3_domain"/>
</dbReference>
<dbReference type="InterPro" id="IPR051702">
    <property type="entry name" value="SH3_domain_YSC84-like"/>
</dbReference>
<dbReference type="InterPro" id="IPR033643">
    <property type="entry name" value="SYLF_SH3YL1-like"/>
</dbReference>
<dbReference type="InterPro" id="IPR007461">
    <property type="entry name" value="Ysc84_actin-binding"/>
</dbReference>
<dbReference type="PANTHER" id="PTHR15629:SF2">
    <property type="entry name" value="SH3 DOMAIN-CONTAINING YSC84-LIKE PROTEIN 1"/>
    <property type="match status" value="1"/>
</dbReference>
<dbReference type="PANTHER" id="PTHR15629">
    <property type="entry name" value="SH3YL1 PROTEIN"/>
    <property type="match status" value="1"/>
</dbReference>
<dbReference type="Pfam" id="PF00018">
    <property type="entry name" value="SH3_1"/>
    <property type="match status" value="1"/>
</dbReference>
<dbReference type="Pfam" id="PF04366">
    <property type="entry name" value="Ysc84"/>
    <property type="match status" value="1"/>
</dbReference>
<dbReference type="PRINTS" id="PR00452">
    <property type="entry name" value="SH3DOMAIN"/>
</dbReference>
<dbReference type="SMART" id="SM00326">
    <property type="entry name" value="SH3"/>
    <property type="match status" value="1"/>
</dbReference>
<dbReference type="SUPFAM" id="SSF50044">
    <property type="entry name" value="SH3-domain"/>
    <property type="match status" value="1"/>
</dbReference>
<dbReference type="PROSITE" id="PS50002">
    <property type="entry name" value="SH3"/>
    <property type="match status" value="1"/>
</dbReference>
<keyword id="KW-0002">3D-structure</keyword>
<keyword id="KW-0963">Cytoplasm</keyword>
<keyword id="KW-0597">Phosphoprotein</keyword>
<keyword id="KW-1185">Reference proteome</keyword>
<keyword id="KW-0728">SH3 domain</keyword>